<accession>Q21CB9</accession>
<proteinExistence type="inferred from homology"/>
<evidence type="ECO:0000255" key="1">
    <source>
        <dbReference type="HAMAP-Rule" id="MF_00133"/>
    </source>
</evidence>
<comment type="function">
    <text evidence="1">The beta subunit is responsible for the synthesis of L-tryptophan from indole and L-serine.</text>
</comment>
<comment type="catalytic activity">
    <reaction evidence="1">
        <text>(1S,2R)-1-C-(indol-3-yl)glycerol 3-phosphate + L-serine = D-glyceraldehyde 3-phosphate + L-tryptophan + H2O</text>
        <dbReference type="Rhea" id="RHEA:10532"/>
        <dbReference type="ChEBI" id="CHEBI:15377"/>
        <dbReference type="ChEBI" id="CHEBI:33384"/>
        <dbReference type="ChEBI" id="CHEBI:57912"/>
        <dbReference type="ChEBI" id="CHEBI:58866"/>
        <dbReference type="ChEBI" id="CHEBI:59776"/>
        <dbReference type="EC" id="4.2.1.20"/>
    </reaction>
</comment>
<comment type="cofactor">
    <cofactor evidence="1">
        <name>pyridoxal 5'-phosphate</name>
        <dbReference type="ChEBI" id="CHEBI:597326"/>
    </cofactor>
</comment>
<comment type="pathway">
    <text evidence="1">Amino-acid biosynthesis; L-tryptophan biosynthesis; L-tryptophan from chorismate: step 5/5.</text>
</comment>
<comment type="subunit">
    <text evidence="1">Tetramer of two alpha and two beta chains.</text>
</comment>
<comment type="similarity">
    <text evidence="1">Belongs to the TrpB family.</text>
</comment>
<keyword id="KW-0028">Amino-acid biosynthesis</keyword>
<keyword id="KW-0057">Aromatic amino acid biosynthesis</keyword>
<keyword id="KW-0456">Lyase</keyword>
<keyword id="KW-0663">Pyridoxal phosphate</keyword>
<keyword id="KW-0822">Tryptophan biosynthesis</keyword>
<dbReference type="EC" id="4.2.1.20" evidence="1"/>
<dbReference type="EMBL" id="CP000301">
    <property type="protein sequence ID" value="ABD85967.1"/>
    <property type="molecule type" value="Genomic_DNA"/>
</dbReference>
<dbReference type="SMR" id="Q21CB9"/>
<dbReference type="STRING" id="316056.RPC_0392"/>
<dbReference type="KEGG" id="rpc:RPC_0392"/>
<dbReference type="eggNOG" id="COG0133">
    <property type="taxonomic scope" value="Bacteria"/>
</dbReference>
<dbReference type="HOGENOM" id="CLU_016734_3_1_5"/>
<dbReference type="OrthoDB" id="9766131at2"/>
<dbReference type="UniPathway" id="UPA00035">
    <property type="reaction ID" value="UER00044"/>
</dbReference>
<dbReference type="GO" id="GO:0005737">
    <property type="term" value="C:cytoplasm"/>
    <property type="evidence" value="ECO:0007669"/>
    <property type="project" value="TreeGrafter"/>
</dbReference>
<dbReference type="GO" id="GO:0004834">
    <property type="term" value="F:tryptophan synthase activity"/>
    <property type="evidence" value="ECO:0007669"/>
    <property type="project" value="UniProtKB-UniRule"/>
</dbReference>
<dbReference type="CDD" id="cd06446">
    <property type="entry name" value="Trp-synth_B"/>
    <property type="match status" value="1"/>
</dbReference>
<dbReference type="FunFam" id="3.40.50.1100:FF:000001">
    <property type="entry name" value="Tryptophan synthase beta chain"/>
    <property type="match status" value="1"/>
</dbReference>
<dbReference type="FunFam" id="3.40.50.1100:FF:000004">
    <property type="entry name" value="Tryptophan synthase beta chain"/>
    <property type="match status" value="1"/>
</dbReference>
<dbReference type="Gene3D" id="3.40.50.1100">
    <property type="match status" value="2"/>
</dbReference>
<dbReference type="HAMAP" id="MF_00133">
    <property type="entry name" value="Trp_synth_beta"/>
    <property type="match status" value="1"/>
</dbReference>
<dbReference type="InterPro" id="IPR006653">
    <property type="entry name" value="Trp_synth_b_CS"/>
</dbReference>
<dbReference type="InterPro" id="IPR006654">
    <property type="entry name" value="Trp_synth_beta"/>
</dbReference>
<dbReference type="InterPro" id="IPR023026">
    <property type="entry name" value="Trp_synth_beta/beta-like"/>
</dbReference>
<dbReference type="InterPro" id="IPR001926">
    <property type="entry name" value="TrpB-like_PALP"/>
</dbReference>
<dbReference type="InterPro" id="IPR036052">
    <property type="entry name" value="TrpB-like_PALP_sf"/>
</dbReference>
<dbReference type="NCBIfam" id="TIGR00263">
    <property type="entry name" value="trpB"/>
    <property type="match status" value="1"/>
</dbReference>
<dbReference type="PANTHER" id="PTHR48077:SF3">
    <property type="entry name" value="TRYPTOPHAN SYNTHASE"/>
    <property type="match status" value="1"/>
</dbReference>
<dbReference type="PANTHER" id="PTHR48077">
    <property type="entry name" value="TRYPTOPHAN SYNTHASE-RELATED"/>
    <property type="match status" value="1"/>
</dbReference>
<dbReference type="Pfam" id="PF00291">
    <property type="entry name" value="PALP"/>
    <property type="match status" value="1"/>
</dbReference>
<dbReference type="PIRSF" id="PIRSF001413">
    <property type="entry name" value="Trp_syn_beta"/>
    <property type="match status" value="1"/>
</dbReference>
<dbReference type="SUPFAM" id="SSF53686">
    <property type="entry name" value="Tryptophan synthase beta subunit-like PLP-dependent enzymes"/>
    <property type="match status" value="1"/>
</dbReference>
<dbReference type="PROSITE" id="PS00168">
    <property type="entry name" value="TRP_SYNTHASE_BETA"/>
    <property type="match status" value="1"/>
</dbReference>
<name>TRPB_RHOPB</name>
<gene>
    <name evidence="1" type="primary">trpB</name>
    <name type="ordered locus">RPC_0392</name>
</gene>
<protein>
    <recommendedName>
        <fullName evidence="1">Tryptophan synthase beta chain</fullName>
        <ecNumber evidence="1">4.2.1.20</ecNumber>
    </recommendedName>
</protein>
<feature type="chain" id="PRO_1000095812" description="Tryptophan synthase beta chain">
    <location>
        <begin position="1"/>
        <end position="404"/>
    </location>
</feature>
<feature type="modified residue" description="N6-(pyridoxal phosphate)lysine" evidence="1">
    <location>
        <position position="98"/>
    </location>
</feature>
<sequence>MTTQLPNSFRSGPDERGHFGIFGGRFVAETLMPLILDLEKAYAGAKADPSFQREMDGYLKDYVGRPSPLYFAERLTDHLGGAKIYFKREELNHTGSHKVNNVLGQIMVARRMGKKRIIAETGAGQHGVATATLCARFGLECIVFMGAVDVERQQPNVIRMQMLGAKVVPVQSGARTLKDAMNEALRDWVTNVSDTFYCIGTAAGPHPYPMMVRDFQSIIGTETKTQMQAAEGRLPDSLVACIGGGSNALGLFHPFLDDPTVEIFGVEAAGHGLTQLHAASIAGGRPGVLHGNRTYLLMDDDGQIQEGHSISAGLDYPGIGPEHSWLHETGRVTYLSATDDEALAAFQLLSRLEGIIPALEPAHAIAKVLELAPQRPKDHLMVINLSGRGDKDIPQVAEILRGQK</sequence>
<reference key="1">
    <citation type="submission" date="2006-03" db="EMBL/GenBank/DDBJ databases">
        <title>Complete sequence of Rhodopseudomonas palustris BisB18.</title>
        <authorList>
            <consortium name="US DOE Joint Genome Institute"/>
            <person name="Copeland A."/>
            <person name="Lucas S."/>
            <person name="Lapidus A."/>
            <person name="Barry K."/>
            <person name="Detter J.C."/>
            <person name="Glavina del Rio T."/>
            <person name="Hammon N."/>
            <person name="Israni S."/>
            <person name="Dalin E."/>
            <person name="Tice H."/>
            <person name="Pitluck S."/>
            <person name="Chain P."/>
            <person name="Malfatti S."/>
            <person name="Shin M."/>
            <person name="Vergez L."/>
            <person name="Schmutz J."/>
            <person name="Larimer F."/>
            <person name="Land M."/>
            <person name="Hauser L."/>
            <person name="Pelletier D.A."/>
            <person name="Kyrpides N."/>
            <person name="Anderson I."/>
            <person name="Oda Y."/>
            <person name="Harwood C.S."/>
            <person name="Richardson P."/>
        </authorList>
    </citation>
    <scope>NUCLEOTIDE SEQUENCE [LARGE SCALE GENOMIC DNA]</scope>
    <source>
        <strain>BisB18</strain>
    </source>
</reference>
<organism>
    <name type="scientific">Rhodopseudomonas palustris (strain BisB18)</name>
    <dbReference type="NCBI Taxonomy" id="316056"/>
    <lineage>
        <taxon>Bacteria</taxon>
        <taxon>Pseudomonadati</taxon>
        <taxon>Pseudomonadota</taxon>
        <taxon>Alphaproteobacteria</taxon>
        <taxon>Hyphomicrobiales</taxon>
        <taxon>Nitrobacteraceae</taxon>
        <taxon>Rhodopseudomonas</taxon>
    </lineage>
</organism>